<feature type="peptide" id="PRO_0000398812" description="Phylloseptin-P1" evidence="3">
    <location>
        <begin position="1"/>
        <end position="19"/>
    </location>
</feature>
<feature type="modified residue" description="Phenylalanine amide" evidence="3">
    <location>
        <position position="19"/>
    </location>
</feature>
<dbReference type="GO" id="GO:0005576">
    <property type="term" value="C:extracellular region"/>
    <property type="evidence" value="ECO:0007669"/>
    <property type="project" value="UniProtKB-SubCell"/>
</dbReference>
<dbReference type="GO" id="GO:0006952">
    <property type="term" value="P:defense response"/>
    <property type="evidence" value="ECO:0007669"/>
    <property type="project" value="UniProtKB-KW"/>
</dbReference>
<evidence type="ECO:0000250" key="1">
    <source>
        <dbReference type="UniProtKB" id="P85882"/>
    </source>
</evidence>
<evidence type="ECO:0000255" key="2"/>
<evidence type="ECO:0000269" key="3">
    <source ref="1"/>
</evidence>
<evidence type="ECO:0000303" key="4">
    <source ref="1"/>
</evidence>
<evidence type="ECO:0000305" key="5"/>
<proteinExistence type="evidence at protein level"/>
<name>PLS1_PITPA</name>
<comment type="function">
    <text evidence="1">Has antimicrobial activity.</text>
</comment>
<comment type="subcellular location">
    <subcellularLocation>
        <location evidence="3">Secreted</location>
    </subcellularLocation>
</comment>
<comment type="tissue specificity">
    <text evidence="3">Expressed by the skin glands.</text>
</comment>
<comment type="mass spectrometry" mass="2048.25" error="0.01" method="MALDI" evidence="3"/>
<comment type="similarity">
    <text evidence="2">Belongs to the frog skin active peptide (FSAP) family. Phylloseptin subfamily.</text>
</comment>
<comment type="online information" name="The antimicrobial peptide database">
    <link uri="https://wangapd3.com/database/query_output.php?ID=00762"/>
</comment>
<accession>P86710</accession>
<organism>
    <name type="scientific">Pithecopus palliatus</name>
    <name type="common">Jaguar leaf frog</name>
    <name type="synonym">Phyllomedusa palliata</name>
    <dbReference type="NCBI Taxonomy" id="3372387"/>
    <lineage>
        <taxon>Eukaryota</taxon>
        <taxon>Metazoa</taxon>
        <taxon>Chordata</taxon>
        <taxon>Craniata</taxon>
        <taxon>Vertebrata</taxon>
        <taxon>Euteleostomi</taxon>
        <taxon>Amphibia</taxon>
        <taxon>Batrachia</taxon>
        <taxon>Anura</taxon>
        <taxon>Neobatrachia</taxon>
        <taxon>Hyloidea</taxon>
        <taxon>Hylidae</taxon>
        <taxon>Phyllomedusinae</taxon>
        <taxon>Pithecopus</taxon>
    </lineage>
</organism>
<reference evidence="5" key="1">
    <citation type="submission" date="2010-07" db="UniProtKB">
        <title>Identification of peptides from Amazonian Phyllomedusa palliata skin secretion by MALDI TOF/TOF.</title>
        <authorList>
            <person name="Cardozo-Filho J.L."/>
            <person name="Monteiro J.R.N."/>
            <person name="Bloch C. Jr."/>
            <person name="Silva L.P."/>
            <person name="Stabeli R.G."/>
            <person name="Calderon L.A."/>
        </authorList>
    </citation>
    <scope>PROTEIN SEQUENCE</scope>
    <scope>SUBCELLULAR LOCATION</scope>
    <scope>TISSUE SPECIFICITY</scope>
    <scope>MASS SPECTROMETRY</scope>
    <scope>AMIDATION AT PHE-19</scope>
    <source>
        <tissue evidence="3">Skin secretion</tissue>
    </source>
</reference>
<protein>
    <recommendedName>
        <fullName evidence="4">Phylloseptin-P1</fullName>
        <shortName evidence="5">PLS-P1</shortName>
    </recommendedName>
</protein>
<keyword id="KW-0027">Amidation</keyword>
<keyword id="KW-0878">Amphibian defense peptide</keyword>
<keyword id="KW-0929">Antimicrobial</keyword>
<keyword id="KW-0903">Direct protein sequencing</keyword>
<keyword id="KW-0964">Secreted</keyword>
<sequence length="19" mass="2049">FLSLIPHAINAVSAIAKHF</sequence>